<reference key="1">
    <citation type="journal article" date="2006" name="J. Virol.">
        <title>Ancient origin and molecular features of the novel human T-lymphotropic virus type 3 revealed by complete genome analysis.</title>
        <authorList>
            <person name="Switzer W.M."/>
            <person name="Qari S.H."/>
            <person name="Wolfe N.D."/>
            <person name="Burke D.S."/>
            <person name="Folks T.M."/>
            <person name="Heneine W."/>
        </authorList>
    </citation>
    <scope>NUCLEOTIDE SEQUENCE [GENOMIC DNA]</scope>
</reference>
<organism>
    <name type="scientific">Human T-cell leukemia virus 3 (strain 2026ND)</name>
    <name type="common">HTLV-3</name>
    <dbReference type="NCBI Taxonomy" id="402036"/>
    <lineage>
        <taxon>Viruses</taxon>
        <taxon>Riboviria</taxon>
        <taxon>Pararnavirae</taxon>
        <taxon>Artverviricota</taxon>
        <taxon>Revtraviricetes</taxon>
        <taxon>Ortervirales</taxon>
        <taxon>Retroviridae</taxon>
        <taxon>Orthoretrovirinae</taxon>
        <taxon>Deltaretrovirus</taxon>
        <taxon>Primate T-lymphotropic virus 3</taxon>
    </lineage>
</organism>
<name>TAX_HTL32</name>
<evidence type="ECO:0000250" key="1"/>
<evidence type="ECO:0000255" key="2"/>
<evidence type="ECO:0000256" key="3">
    <source>
        <dbReference type="SAM" id="MobiDB-lite"/>
    </source>
</evidence>
<evidence type="ECO:0000305" key="4"/>
<sequence>MAHFPGFGQSLLYGYPVYVFGDCVQADWCPISGGLCSARLHRHALLATCPEHQITWDPIDGRVVSSALQYLIPRLPSFPTQRTTRTLKVLTPPTTAATPKIPPSFFHAVKKHTPFRNNCLELTLGEQLPAMSFPDPGLRPQNIYTMWGSSVVCLYLYQLSPPMTWPLIPHVIFCHPEQLGAFLTRVPTKRLEELLYKIFLSTGAIIILPENCFPTTLFQPTRAPAVQAPWHTGLLPCQKEIATPGLIWTFTDGSPMISGPCPKEGQPSLVVQSSTFIFQQFQTKASHPAFLLSHKLIHYSSFHSLHLLFEEYTTIPFSLLFNEKGANVDDDEPRDGSQPPARGQIAESPV</sequence>
<proteinExistence type="inferred from homology"/>
<comment type="function">
    <text evidence="1">Transcriptional activator that activates both the viral long terminal repeat (LTR) and cellular promoters via activation of CREB, NF-kappa-B, SRF and AP-1 pathways. Binds to two 21 bp repeat elements located within the LTRs, referred to as Tax-responsive element (TRE). Binding to TRE requires the interaction with CREB1 and CREBBP. Activation of NF-kappa-B leads to up-regulation of the expression of gene promoters containing NFkB motifs like IL8 or BCL2L1. Inhibits the action of p53/TP53 and MYCB. All these functions could lead to the possible occurrence of lymphoproliferative disorders. Required for viral replication (By similarity).</text>
</comment>
<comment type="subunit">
    <text evidence="1">Homodimer. Interacts with host CREB1, CREBBP and EP300 (By similarity).</text>
</comment>
<comment type="subcellular location">
    <subcellularLocation>
        <location evidence="1">Host nucleus</location>
    </subcellularLocation>
    <subcellularLocation>
        <location evidence="1">Host cytoplasm</location>
    </subcellularLocation>
    <text evidence="1">Shuttles from the nucleus to the cytoplasm. Found predominantly in the nucleus (By similarity).</text>
</comment>
<comment type="domain">
    <text evidence="1">The 48 N-terminal residues contain a non-canonical functional nuclear localization signal (NLS).</text>
</comment>
<comment type="domain">
    <text>The PDZ-binding domain may mediate binding to PDZ-containing proteins and could be a factor of pathogenicity.</text>
</comment>
<comment type="PTM">
    <text evidence="1">Phosphorylation at Thr-48 results in the loss of NF-kappa-B activation function. Phosphorylation at Thr-215 results in loss of CREB and NF-B responsive promoters activation. Phosphorylation at Thr-184 has no effect on these functions. Phosphorylation of either Ser-300 or Ser-301 is necessary for localization to nuclear bodies. Thr-48, Thr-184 and Thr-215 are highly phosphorylated, whereas Ser-300 or Ser-301 are only rarely phosphorylated (By similarity).</text>
</comment>
<comment type="similarity">
    <text evidence="4">Belongs to the deltaretrovirus Tax protein family.</text>
</comment>
<gene>
    <name type="primary">tax</name>
</gene>
<accession>Q0R5R1</accession>
<dbReference type="EMBL" id="DQ093792">
    <property type="protein sequence ID" value="AAZ77661.1"/>
    <property type="molecule type" value="Genomic_DNA"/>
</dbReference>
<dbReference type="Proteomes" id="UP000008029">
    <property type="component" value="Genome"/>
</dbReference>
<dbReference type="GO" id="GO:0030430">
    <property type="term" value="C:host cell cytoplasm"/>
    <property type="evidence" value="ECO:0007669"/>
    <property type="project" value="UniProtKB-SubCell"/>
</dbReference>
<dbReference type="GO" id="GO:0042025">
    <property type="term" value="C:host cell nucleus"/>
    <property type="evidence" value="ECO:0007669"/>
    <property type="project" value="UniProtKB-SubCell"/>
</dbReference>
<dbReference type="GO" id="GO:0003677">
    <property type="term" value="F:DNA binding"/>
    <property type="evidence" value="ECO:0007669"/>
    <property type="project" value="UniProtKB-KW"/>
</dbReference>
<dbReference type="GO" id="GO:0017124">
    <property type="term" value="F:SH3 domain binding"/>
    <property type="evidence" value="ECO:0007669"/>
    <property type="project" value="UniProtKB-KW"/>
</dbReference>
<dbReference type="GO" id="GO:0008270">
    <property type="term" value="F:zinc ion binding"/>
    <property type="evidence" value="ECO:0007669"/>
    <property type="project" value="UniProtKB-KW"/>
</dbReference>
<dbReference type="GO" id="GO:0045893">
    <property type="term" value="P:positive regulation of DNA-templated transcription"/>
    <property type="evidence" value="ECO:0007669"/>
    <property type="project" value="InterPro"/>
</dbReference>
<dbReference type="GO" id="GO:0039646">
    <property type="term" value="P:symbiont-mediated perturbation of host cell cycle G0/G1 transition checkpoint"/>
    <property type="evidence" value="ECO:0007669"/>
    <property type="project" value="UniProtKB-KW"/>
</dbReference>
<dbReference type="GO" id="GO:0044071">
    <property type="term" value="P:symbiont-mediated perturbation of host cell cycle progression"/>
    <property type="evidence" value="ECO:0007669"/>
    <property type="project" value="UniProtKB-KW"/>
</dbReference>
<dbReference type="InterPro" id="IPR004120">
    <property type="entry name" value="Tax"/>
</dbReference>
<dbReference type="Pfam" id="PF02959">
    <property type="entry name" value="Tax"/>
    <property type="match status" value="1"/>
</dbReference>
<feature type="chain" id="PRO_0000259952" description="Protein Tax-3">
    <location>
        <begin position="1"/>
        <end position="350"/>
    </location>
</feature>
<feature type="zinc finger region" evidence="2">
    <location>
        <begin position="23"/>
        <end position="49"/>
    </location>
</feature>
<feature type="region of interest" description="Interaction with CREB1" evidence="1">
    <location>
        <begin position="1"/>
        <end position="58"/>
    </location>
</feature>
<feature type="region of interest" description="Interaction with CREBBP/P300" evidence="1">
    <location>
        <begin position="81"/>
        <end position="95"/>
    </location>
</feature>
<feature type="region of interest" description="Interaction with IKBKG" evidence="1">
    <location>
        <begin position="106"/>
        <end position="111"/>
    </location>
</feature>
<feature type="region of interest" description="Homodimerization" evidence="1">
    <location>
        <begin position="116"/>
        <end position="145"/>
    </location>
</feature>
<feature type="region of interest" description="Homodimerization" evidence="1">
    <location>
        <begin position="213"/>
        <end position="248"/>
    </location>
</feature>
<feature type="region of interest" description="Transactivation" evidence="1">
    <location>
        <begin position="289"/>
        <end position="322"/>
    </location>
</feature>
<feature type="region of interest" description="Interaction with CREBBP C-terminus" evidence="1">
    <location>
        <begin position="312"/>
        <end position="319"/>
    </location>
</feature>
<feature type="region of interest" description="Disordered" evidence="3">
    <location>
        <begin position="326"/>
        <end position="350"/>
    </location>
</feature>
<feature type="short sequence motif" description="SH3-binding" evidence="2">
    <location>
        <begin position="73"/>
        <end position="80"/>
    </location>
</feature>
<feature type="short sequence motif" description="Nuclear export signal" evidence="1">
    <location>
        <begin position="188"/>
        <end position="202"/>
    </location>
</feature>
<feature type="short sequence motif" description="PDZ-binding" evidence="1">
    <location>
        <begin position="347"/>
        <end position="350"/>
    </location>
</feature>
<feature type="modified residue" description="Phosphothreonine; by host" evidence="1">
    <location>
        <position position="48"/>
    </location>
</feature>
<feature type="modified residue" description="Phosphothreonine; by host" evidence="1">
    <location>
        <position position="184"/>
    </location>
</feature>
<feature type="modified residue" description="Phosphothreonine; by host" evidence="1">
    <location>
        <position position="215"/>
    </location>
</feature>
<feature type="modified residue" description="Phosphoserine; by host" evidence="1">
    <location>
        <position position="300"/>
    </location>
</feature>
<feature type="modified residue" description="Phosphoserine; by host" evidence="1">
    <location>
        <position position="301"/>
    </location>
</feature>
<protein>
    <recommendedName>
        <fullName>Protein Tax-3</fullName>
    </recommendedName>
    <alternativeName>
        <fullName>Trans-activating transcriptional regulatory protein of HTLV-3</fullName>
    </alternativeName>
</protein>
<keyword id="KW-0010">Activator</keyword>
<keyword id="KW-0238">DNA-binding</keyword>
<keyword id="KW-1077">G0/G1 host cell cycle checkpoint dysregulation by virus</keyword>
<keyword id="KW-1035">Host cytoplasm</keyword>
<keyword id="KW-1048">Host nucleus</keyword>
<keyword id="KW-0945">Host-virus interaction</keyword>
<keyword id="KW-0479">Metal-binding</keyword>
<keyword id="KW-1121">Modulation of host cell cycle by virus</keyword>
<keyword id="KW-0553">Oncogene</keyword>
<keyword id="KW-0597">Phosphoprotein</keyword>
<keyword id="KW-1185">Reference proteome</keyword>
<keyword id="KW-0729">SH3-binding</keyword>
<keyword id="KW-0804">Transcription</keyword>
<keyword id="KW-0805">Transcription regulation</keyword>
<keyword id="KW-0862">Zinc</keyword>
<keyword id="KW-0863">Zinc-finger</keyword>
<organismHost>
    <name type="scientific">Homo sapiens</name>
    <name type="common">Human</name>
    <dbReference type="NCBI Taxonomy" id="9606"/>
</organismHost>